<accession>P03311</accession>
<accession>Q84781</accession>
<accession>Q84782</accession>
<accession>Q9QCE2</accession>
<reference key="1">
    <citation type="journal article" date="1999" name="Virus Res.">
        <title>Genomic nucleotide sequence of a foot-and-mouth disease virus clone and its persistent derivatives. Implications for the evolution of viral quasispecies during a persistent infection.</title>
        <authorList>
            <person name="Toja M."/>
            <person name="Escarmis C."/>
            <person name="Domingo E."/>
        </authorList>
    </citation>
    <scope>NUCLEOTIDE SEQUENCE [GENOMIC RNA]</scope>
</reference>
<reference key="2">
    <citation type="journal article" date="1983" name="Gene">
        <title>Molecular cloning of cDNA from foot-and-mouth disease virus C1-Santa Pau (C-S8). Sequence of protein-VP1-coding segment.</title>
        <authorList>
            <person name="Villanueva N."/>
            <person name="Davila M."/>
            <person name="Ortin J."/>
            <person name="Domingo E."/>
        </authorList>
    </citation>
    <scope>NUCLEOTIDE SEQUENCE [GENOMIC RNA] OF 678-1011</scope>
</reference>
<reference key="3">
    <citation type="journal article" date="1985" name="Gene">
        <title>Sequence of the viral replicase gene from foot-and-mouth disease virus C1-Santa Pau (C-S8).</title>
        <authorList>
            <person name="Martinez-Salas E."/>
            <person name="Ortin J."/>
            <person name="Domingo E."/>
        </authorList>
    </citation>
    <scope>NUCLEOTIDE SEQUENCE [GENOMIC RNA] OF 1799-2327</scope>
</reference>
<reference key="4">
    <citation type="journal article" date="2009" name="J. Virol.">
        <title>Foot-and-mouth disease virus assembly: processing of recombinant capsid precursor by exogenous protease induces self-assembly of pentamers in vitro in a myristoylation-dependent manner.</title>
        <authorList>
            <person name="Goodwin S."/>
            <person name="Tuthill T.J."/>
            <person name="Arias A."/>
            <person name="Killington R.A."/>
            <person name="Rowlands D.J."/>
        </authorList>
    </citation>
    <scope>MYRISTOYLATION AT GLY-202</scope>
    <scope>MUTAGENESIS OF GLY-202</scope>
</reference>
<reference key="5">
    <citation type="journal article" date="2014" name="FEBS Lett.">
        <title>L protease from foot and mouth disease virus confers eIF2-independent translation for mRNAs bearing picornavirus IRES.</title>
        <authorList>
            <person name="Moral-Lopez P."/>
            <person name="Alvarez E."/>
            <person name="Redondo N."/>
            <person name="Skern T."/>
            <person name="Carrasco L."/>
        </authorList>
    </citation>
    <scope>FUNCTION</scope>
</reference>
<reference key="6">
    <citation type="journal article" date="1997" name="EMBO J.">
        <title>Structure of the complex of an Fab fragment of a neutralizing antibody with foot-and-mouth disease virus: positioning of a highly mobile antigenic loop.</title>
        <authorList>
            <person name="Hewat E.A."/>
            <person name="Verdaguer N."/>
            <person name="Fita I."/>
            <person name="Blakemore W."/>
            <person name="Brookes S."/>
            <person name="King A."/>
            <person name="Newman J."/>
            <person name="Domingo E."/>
            <person name="Mateu M.G."/>
            <person name="Stuart D.I."/>
        </authorList>
    </citation>
    <scope>STRUCTURE BY ELECTRON MICROSCOPY (30.00 ANGSTROMS) OF 855-878</scope>
</reference>
<reference evidence="17 18 19 20 21" key="7">
    <citation type="journal article" date="2015" name="J. Virol.">
        <title>Multifunctionality of a picornavirus polymerase domain: nuclear localization signal and nucleotide recognition.</title>
        <authorList>
            <person name="Ferrer-Orta C."/>
            <person name="de la Higuera I."/>
            <person name="Caridi F."/>
            <person name="Sanchez-Aparicio M.T."/>
            <person name="Moreno E."/>
            <person name="Perales C."/>
            <person name="Singh K."/>
            <person name="Sarafianos S.G."/>
            <person name="Sobrino F."/>
            <person name="Domingo E."/>
            <person name="Verdaguer N."/>
        </authorList>
    </citation>
    <scope>X-RAY CRYSTALLOGRAPHY (1.80 ANGSTROMS) OF 1858-2327 IN COMPLEX WITH MG(2+); MN(2+) AND RNA</scope>
    <scope>NUCLEAR LOCALIZATION SIGNAL (RNA-DIRECTED RNA POLYMERASE)</scope>
    <scope>MUTAGENESIS OF LYS-1875 AND LYS-1877</scope>
    <scope>CATALYTIC ACTIVITY (RNA-DIRECTED RNA POLYMERASE)</scope>
</reference>
<reference evidence="22 23" key="8">
    <citation type="journal article" date="2023" name="PLoS Pathog.">
        <title>Dual role of the foot-and-mouth disease virus 3B1 protein in the replication complex: As protein primer and as an essential component to recruit 3Dpol to membranes.</title>
        <authorList>
            <person name="Ferrer-Orta C."/>
            <person name="Ferrero D.S."/>
            <person name="Verdaguer N."/>
        </authorList>
    </citation>
    <scope>X-RAY CRYSTALLOGRAPHY (1.70 ANGSTROMS) OF 1858-2327 AND 1574-1596</scope>
    <scope>INTERACTION WITH 3B-1 (RNA-DIRECTED RNA POLYMERASE)</scope>
    <scope>INTERACTION WITH 3B-2 (RNA-DIRECTED RNA POLYMERASE)</scope>
    <scope>INTERACTION WITH 3B-3 (RNA-DIRECTED RNA POLYMERASE)</scope>
    <scope>INTERACTION WITH RNA-DIRECTED RNA POLYMERASE (3B-1)</scope>
    <scope>INTERACTION WITH RNA-DIRECTED RNA POLYMERASE (3B-2)</scope>
    <scope>INTERACTION WITH RNA-DIRECTED RNA POLYMERASE (3B-3)</scope>
</reference>
<organismHost>
    <name type="scientific">Bos taurus</name>
    <name type="common">Bovine</name>
    <dbReference type="NCBI Taxonomy" id="9913"/>
</organismHost>
<organismHost>
    <name type="scientific">Capra hircus</name>
    <name type="common">Goat</name>
    <dbReference type="NCBI Taxonomy" id="9925"/>
</organismHost>
<organismHost>
    <name type="scientific">Cervidae</name>
    <name type="common">Deer</name>
    <dbReference type="NCBI Taxonomy" id="9850"/>
</organismHost>
<organismHost>
    <name type="scientific">Erinaceidae</name>
    <name type="common">hedgehogs</name>
    <dbReference type="NCBI Taxonomy" id="9363"/>
</organismHost>
<organismHost>
    <name type="scientific">Loxodonta africana</name>
    <name type="common">African elephant</name>
    <dbReference type="NCBI Taxonomy" id="9785"/>
</organismHost>
<organismHost>
    <name type="scientific">Ovis aries</name>
    <name type="common">Sheep</name>
    <dbReference type="NCBI Taxonomy" id="9940"/>
</organismHost>
<organismHost>
    <name type="scientific">Rattus norvegicus</name>
    <name type="common">Rat</name>
    <dbReference type="NCBI Taxonomy" id="10116"/>
</organismHost>
<organismHost>
    <name type="scientific">Sus scrofa</name>
    <name type="common">Pig</name>
    <dbReference type="NCBI Taxonomy" id="9823"/>
</organismHost>
<organism>
    <name type="scientific">Foot-and-mouth disease virus (isolate -/Spain/S8c1SantaPau/1970 serotype C)</name>
    <name type="common">FMDV</name>
    <dbReference type="NCBI Taxonomy" id="12120"/>
    <lineage>
        <taxon>Viruses</taxon>
        <taxon>Riboviria</taxon>
        <taxon>Orthornavirae</taxon>
        <taxon>Pisuviricota</taxon>
        <taxon>Pisoniviricetes</taxon>
        <taxon>Picornavirales</taxon>
        <taxon>Picornaviridae</taxon>
        <taxon>Caphthovirinae</taxon>
        <taxon>Aphthovirus</taxon>
        <taxon>Foot-and-mouth disease virus</taxon>
    </lineage>
</organism>
<sequence length="2327" mass="258126">MNTTDCFIAVVNAIKEVRALFLPRTAGKMEFTLHDGEKKVFYSRPNNHDNCWLNTILQLFRYVDEPFFDWVYNSPENLTLEAIKQLEELTGLELREGGPPALVIWNIKHLLHTGIGTASRPSEVCMVDGTDMCLADFHAGIFMKGREHAVFACVTSNGWYAIDDEDFYPWTPDPSDVLVFVPYDQEPLNEGWKASVQRKLKGAGQSSPATGSQNQSGNTGSIINNYYMQQYQNSMDTQLGDNAISGGSNEGSTDTTSTHTTNTQNNDWFSKLASSAFSGLFGALLADKKTEETTLLEDRILTTRNGHTTSTTQSSVGVTFGYATAEDSTSGPNTSGLETRVHQAERFFKMALFDWVPSQNFGHMHKVVLPHEPKGVYGGLVKSYAYMRNGWDVEVTAVGNQFNGGCLLVALVPEMGDISDREKYQLTLYPHQFINPRTNMTAHITVPYVGVNRYDQYKQHRPWTLVVMVVAPLTTNTAGAQQIKVYANIAPTNVHVAGELPSKEGIFPVACSDGYGNMVTTDPKTADPAYGKVYNPPRTALPGRFTNYLDVAEACPTFLMFENVPYVSTRTDGQRLLAKFDVSLAAKHMSNTYLAGLAQYYTQYTGTINLHFMFTGPTDAKARYMVAYVPPGMDAPDNPEEAAHCIHAEWDTGLNSKFTFSIPYISAADYAYTASHEAETTCVQGWVCVYQITHGKADADALVVSASAGKDFELRLPVDARQQTTTTGESADPVTTTVENYGGETQVQRRHHTDVAFVLDRFVKVTVSDNQHTLDVMQAHKDNIVGALLRAATYYFSDLEIAVTHTGKLTWVPNGAPVSALNNTTNPTAYHKGPVTRLALPYTAPHRVLATAYTGTTTYTASARGDLAHLTTTHARHLPTSFNFGAVKAETITELLVRMKRAELYCPRPILPIQPTGDRHKQPLVAPAKQLLNFDLLKLAGDVESNPGPFFFSDVRSNFSKLVETINQMQEDMSTKHGPDFNRLVSAFEELASGVKAIRTGLDEAKPWYKLIKLLSRLSCMAAVAARSKDPVLVAIMLADTGLEILDSTFVVKKISDSLSSLFHVPAPAFSFGAPILLAGLVKVASSFFRSTPEDLERAEKQLKARDINDIFAILKNGEWLVKLILAIRDWIKAWIASEEKFVTMTDLVPGILEKQRDLNDPSKYKDAKEWLDNTRQVCLKSGNVHIANLCKVVAPAPSKSRPEPVVVCLRGKSGQGKSFLANVLAQAISTHLTGRTDSVWYCPPDPDHFDGYNQQTVVVMDDLGQNPDGKDFKYFAQMVSTTGFIPPMASLEDKGKPFSSKVIIATTNLYSGFTPKTMVCPDALNRRFHFDIDVSAKDGYKINNKLDIIKALEDTHTNPVAMFQYDCALLNGMAVEMKRLQQDMFKPQPPLQNVYQLVQEVIERVELHEKVSSHPIFKQISIPSQKSVLYFLIEKGQHEAAIEFFEGMVHDSIKEELRPLIQQTSFVKRAFKRLKENFEIVALCLTLLANIVIMIRETHKRQKMVDDAVNEYIEKANITTDDQTLDEAEKNPLETSGASTVGFRERTLPGQKARDDVNSEPAQPTEEQPQAEGPYAGPLERQRPLKVRAKLPRQEGPYAGPMERQKPLKVKARAPVVKEGPYEGPVKKPVALKVKAKNLIVTESGAPPTDLQKMVMGNTKPVELILDGKTVAICCATGVFGTAYLVPRHLFAEKYDKIMLDGRALTDSDYRVFEFEIKVKGQDMLSDAALMVLHRGNRVRDITKHFRDVARMKKGTPVVGVINNADVGRLIFSGEALTYKDIVVCMDGDTMPGLFAYKAATKAGYCGGAVLAKDGADTFIVGTHSAGGNGVGYCSCVSRSMLLKMKAHIDPEPHHEGLIVDTRDVEERVHVMRKTKLAPTVAHGVFNPEFGPAALSNKDPRLNEGVVLDEVIFSKHKGDTKMSAEDKALFRRCAADYASRLHSVLGTANAPLSIYEAIKGVDGLDAMEPDTAPGLPWALQGKRRGALIDFENGTVGPEVEAALKLMEKREYKFACQTFLKDEIRPMEKVRAGKTRIVDVLPVEHILYTRMMIGRFCAQMHSNNGPQIGSAVGCNPDVDWQRFGTHFAQYRNVWDVDYSAFDANHCSDAMNIMFEEVFRTEFGFHPNAEWILKTLVNTEHAYENKRITVEGGMPSGCSATSIINTILNNIYVLYALRRHYEGVELDTYTMISYGDDIVVASDYDLDFEALKPHFKSLGQTITPADKSDKGFVLGHSITDVTFLKRHFHMDYGTGFYKPVMASKTLEAILSFARRGTIQEKLISVAGLAVHSGPDEYRRLFEPFQGLFEIPSYRSLYLRWVNAVCGDA</sequence>
<protein>
    <recommendedName>
        <fullName>Genome polyprotein</fullName>
    </recommendedName>
    <component>
        <recommendedName>
            <fullName>Leader protease</fullName>
            <shortName>Lpro</shortName>
            <ecNumber evidence="4">3.4.22.46</ecNumber>
        </recommendedName>
    </component>
    <component>
        <recommendedName>
            <fullName>Capsid protein VP0</fullName>
        </recommendedName>
        <alternativeName>
            <fullName>VP4-VP2</fullName>
        </alternativeName>
    </component>
    <component>
        <recommendedName>
            <fullName>Capsid protein VP4</fullName>
        </recommendedName>
        <alternativeName>
            <fullName>P1A</fullName>
        </alternativeName>
        <alternativeName>
            <fullName>Virion protein 4</fullName>
        </alternativeName>
    </component>
    <component>
        <recommendedName>
            <fullName>Capsid protein VP2</fullName>
        </recommendedName>
        <alternativeName>
            <fullName>P1B</fullName>
        </alternativeName>
        <alternativeName>
            <fullName>Virion protein 2</fullName>
        </alternativeName>
    </component>
    <component>
        <recommendedName>
            <fullName>Capsid protein VP3</fullName>
        </recommendedName>
        <alternativeName>
            <fullName>P1C</fullName>
        </alternativeName>
        <alternativeName>
            <fullName>Virion protein 3</fullName>
        </alternativeName>
    </component>
    <component>
        <recommendedName>
            <fullName>Capsid protein VP1</fullName>
        </recommendedName>
        <alternativeName>
            <fullName>P1D</fullName>
        </alternativeName>
        <alternativeName>
            <fullName>Virion protein 1</fullName>
        </alternativeName>
    </component>
    <component>
        <recommendedName>
            <fullName>Protein 2A</fullName>
            <shortName>P2A</shortName>
        </recommendedName>
        <alternativeName>
            <fullName>P52</fullName>
        </alternativeName>
    </component>
    <component>
        <recommendedName>
            <fullName>Protein 2B</fullName>
            <shortName>P2B</shortName>
        </recommendedName>
    </component>
    <component>
        <recommendedName>
            <fullName>Protein 2C</fullName>
            <shortName>P2C</shortName>
            <ecNumber evidence="4">3.6.1.15</ecNumber>
        </recommendedName>
    </component>
    <component>
        <recommendedName>
            <fullName>Protein 3A</fullName>
            <shortName>P3A</shortName>
        </recommendedName>
    </component>
    <component>
        <recommendedName>
            <fullName>Protein 3B-1</fullName>
            <shortName>P3B-1</shortName>
        </recommendedName>
        <alternativeName>
            <fullName>Genome-linked protein VPg1</fullName>
        </alternativeName>
    </component>
    <component>
        <recommendedName>
            <fullName>Protein 3B-2</fullName>
            <shortName>P3B-2</shortName>
        </recommendedName>
        <alternativeName>
            <fullName>Genome-linked protein VPg2</fullName>
        </alternativeName>
    </component>
    <component>
        <recommendedName>
            <fullName>Protein 3B-3</fullName>
            <shortName>P3B-3</shortName>
        </recommendedName>
        <alternativeName>
            <fullName>Genome-linked protein VPg3</fullName>
        </alternativeName>
    </component>
    <component>
        <recommendedName>
            <fullName>Protease 3C</fullName>
            <ecNumber>3.4.22.28</ecNumber>
        </recommendedName>
        <alternativeName>
            <fullName>Picornain 3C</fullName>
            <shortName>P3C</shortName>
        </alternativeName>
        <alternativeName>
            <fullName>Protease P20B</fullName>
        </alternativeName>
    </component>
    <component>
        <recommendedName>
            <fullName>RNA-directed RNA polymerase 3D-POL</fullName>
            <shortName>P3D-POL</shortName>
            <ecNumber evidence="14">2.7.7.48</ecNumber>
        </recommendedName>
        <alternativeName>
            <fullName>P56A</fullName>
        </alternativeName>
    </component>
</protein>
<dbReference type="EC" id="3.4.22.46" evidence="4"/>
<dbReference type="EC" id="3.6.1.15" evidence="4"/>
<dbReference type="EC" id="3.4.22.28"/>
<dbReference type="EC" id="2.7.7.48" evidence="14"/>
<dbReference type="EMBL" id="AJ133357">
    <property type="protein sequence ID" value="CAB60267.1"/>
    <property type="molecule type" value="Genomic_RNA"/>
</dbReference>
<dbReference type="EMBL" id="M11027">
    <property type="protein sequence ID" value="AAA42654.1"/>
    <property type="molecule type" value="Genomic_RNA"/>
</dbReference>
<dbReference type="PIR" id="JC1328">
    <property type="entry name" value="JC1328"/>
</dbReference>
<dbReference type="PIR" id="JC1330">
    <property type="entry name" value="JC1330"/>
</dbReference>
<dbReference type="PIR" id="JC1331">
    <property type="entry name" value="JC1331"/>
</dbReference>
<dbReference type="PIR" id="JC1334">
    <property type="entry name" value="JC1334"/>
</dbReference>
<dbReference type="PDB" id="1QGC">
    <property type="method" value="EM"/>
    <property type="resolution" value="30.00 A"/>
    <property type="chains" value="1=724-930, 2=287-504, 3=505-723, 5=859-879"/>
</dbReference>
<dbReference type="PDB" id="4WYL">
    <property type="method" value="X-ray"/>
    <property type="resolution" value="2.00 A"/>
    <property type="chains" value="A=1858-2327"/>
</dbReference>
<dbReference type="PDB" id="4WYW">
    <property type="method" value="X-ray"/>
    <property type="resolution" value="1.80 A"/>
    <property type="chains" value="A=1858-2327"/>
</dbReference>
<dbReference type="PDB" id="4WZM">
    <property type="method" value="X-ray"/>
    <property type="resolution" value="2.52 A"/>
    <property type="chains" value="A=1858-2327"/>
</dbReference>
<dbReference type="PDB" id="4WZQ">
    <property type="method" value="X-ray"/>
    <property type="resolution" value="2.80 A"/>
    <property type="chains" value="A=1858-2327"/>
</dbReference>
<dbReference type="PDB" id="4X2B">
    <property type="method" value="X-ray"/>
    <property type="resolution" value="2.94 A"/>
    <property type="chains" value="A=1858-2327"/>
</dbReference>
<dbReference type="PDB" id="5JXS">
    <property type="method" value="X-ray"/>
    <property type="resolution" value="2.80 A"/>
    <property type="chains" value="A=1858-2327"/>
</dbReference>
<dbReference type="PDB" id="5N8X">
    <property type="method" value="X-ray"/>
    <property type="resolution" value="2.40 A"/>
    <property type="chains" value="A=1858-2327"/>
</dbReference>
<dbReference type="PDB" id="5N95">
    <property type="method" value="X-ray"/>
    <property type="resolution" value="2.60 A"/>
    <property type="chains" value="A=1858-2327"/>
</dbReference>
<dbReference type="PDB" id="6GVV">
    <property type="method" value="X-ray"/>
    <property type="resolution" value="2.35 A"/>
    <property type="chains" value="A=1858-2327"/>
</dbReference>
<dbReference type="PDB" id="6GVY">
    <property type="method" value="X-ray"/>
    <property type="resolution" value="2.20 A"/>
    <property type="chains" value="A=1858-2327"/>
</dbReference>
<dbReference type="PDB" id="6KWK">
    <property type="method" value="X-ray"/>
    <property type="resolution" value="2.50 A"/>
    <property type="chains" value="C=440-448"/>
</dbReference>
<dbReference type="PDB" id="6KWL">
    <property type="method" value="X-ray"/>
    <property type="resolution" value="1.80 A"/>
    <property type="chains" value="C=440-448"/>
</dbReference>
<dbReference type="PDB" id="6S2L">
    <property type="method" value="X-ray"/>
    <property type="resolution" value="2.30 A"/>
    <property type="chains" value="A=1858-2327"/>
</dbReference>
<dbReference type="PDB" id="8C1N">
    <property type="method" value="X-ray"/>
    <property type="resolution" value="1.70 A"/>
    <property type="chains" value="A/B=1858-2327, C=1574-1596"/>
</dbReference>
<dbReference type="PDB" id="8C2P">
    <property type="method" value="X-ray"/>
    <property type="resolution" value="1.85 A"/>
    <property type="chains" value="A=1858-2327, B=1621-1644"/>
</dbReference>
<dbReference type="PDBsum" id="1QGC"/>
<dbReference type="PDBsum" id="4WYL"/>
<dbReference type="PDBsum" id="4WYW"/>
<dbReference type="PDBsum" id="4WZM"/>
<dbReference type="PDBsum" id="4WZQ"/>
<dbReference type="PDBsum" id="4X2B"/>
<dbReference type="PDBsum" id="5JXS"/>
<dbReference type="PDBsum" id="5N8X"/>
<dbReference type="PDBsum" id="5N95"/>
<dbReference type="PDBsum" id="6GVV"/>
<dbReference type="PDBsum" id="6GVY"/>
<dbReference type="PDBsum" id="6KWK"/>
<dbReference type="PDBsum" id="6KWL"/>
<dbReference type="PDBsum" id="6S2L"/>
<dbReference type="PDBsum" id="8C1N"/>
<dbReference type="PDBsum" id="8C2P"/>
<dbReference type="SMR" id="P03311"/>
<dbReference type="MEROPS" id="C03.008"/>
<dbReference type="ABCD" id="P03311">
    <property type="antibodies" value="1 sequenced antibody"/>
</dbReference>
<dbReference type="EvolutionaryTrace" id="P03311"/>
<dbReference type="Proteomes" id="UP000012670">
    <property type="component" value="Genome"/>
</dbReference>
<dbReference type="GO" id="GO:0044162">
    <property type="term" value="C:host cell cytoplasmic vesicle membrane"/>
    <property type="evidence" value="ECO:0007669"/>
    <property type="project" value="UniProtKB-SubCell"/>
</dbReference>
<dbReference type="GO" id="GO:0044167">
    <property type="term" value="C:host cell endoplasmic reticulum membrane"/>
    <property type="evidence" value="ECO:0007669"/>
    <property type="project" value="UniProtKB-SubCell"/>
</dbReference>
<dbReference type="GO" id="GO:0042025">
    <property type="term" value="C:host cell nucleus"/>
    <property type="evidence" value="ECO:0007669"/>
    <property type="project" value="UniProtKB-SubCell"/>
</dbReference>
<dbReference type="GO" id="GO:0016020">
    <property type="term" value="C:membrane"/>
    <property type="evidence" value="ECO:0007669"/>
    <property type="project" value="UniProtKB-KW"/>
</dbReference>
<dbReference type="GO" id="GO:0039618">
    <property type="term" value="C:T=pseudo3 icosahedral viral capsid"/>
    <property type="evidence" value="ECO:0007669"/>
    <property type="project" value="UniProtKB-KW"/>
</dbReference>
<dbReference type="GO" id="GO:0005524">
    <property type="term" value="F:ATP binding"/>
    <property type="evidence" value="ECO:0007669"/>
    <property type="project" value="UniProtKB-KW"/>
</dbReference>
<dbReference type="GO" id="GO:0015267">
    <property type="term" value="F:channel activity"/>
    <property type="evidence" value="ECO:0007669"/>
    <property type="project" value="UniProtKB-KW"/>
</dbReference>
<dbReference type="GO" id="GO:0004197">
    <property type="term" value="F:cysteine-type endopeptidase activity"/>
    <property type="evidence" value="ECO:0007669"/>
    <property type="project" value="UniProtKB-EC"/>
</dbReference>
<dbReference type="GO" id="GO:0017111">
    <property type="term" value="F:ribonucleoside triphosphate phosphatase activity"/>
    <property type="evidence" value="ECO:0007669"/>
    <property type="project" value="UniProtKB-EC"/>
</dbReference>
<dbReference type="GO" id="GO:0003723">
    <property type="term" value="F:RNA binding"/>
    <property type="evidence" value="ECO:0007669"/>
    <property type="project" value="UniProtKB-KW"/>
</dbReference>
<dbReference type="GO" id="GO:0003724">
    <property type="term" value="F:RNA helicase activity"/>
    <property type="evidence" value="ECO:0007669"/>
    <property type="project" value="InterPro"/>
</dbReference>
<dbReference type="GO" id="GO:0003968">
    <property type="term" value="F:RNA-directed RNA polymerase activity"/>
    <property type="evidence" value="ECO:0007669"/>
    <property type="project" value="UniProtKB-KW"/>
</dbReference>
<dbReference type="GO" id="GO:0005198">
    <property type="term" value="F:structural molecule activity"/>
    <property type="evidence" value="ECO:0007669"/>
    <property type="project" value="InterPro"/>
</dbReference>
<dbReference type="GO" id="GO:0075512">
    <property type="term" value="P:clathrin-dependent endocytosis of virus by host cell"/>
    <property type="evidence" value="ECO:0007669"/>
    <property type="project" value="UniProtKB-KW"/>
</dbReference>
<dbReference type="GO" id="GO:0006351">
    <property type="term" value="P:DNA-templated transcription"/>
    <property type="evidence" value="ECO:0007669"/>
    <property type="project" value="InterPro"/>
</dbReference>
<dbReference type="GO" id="GO:0034220">
    <property type="term" value="P:monoatomic ion transmembrane transport"/>
    <property type="evidence" value="ECO:0007669"/>
    <property type="project" value="UniProtKB-KW"/>
</dbReference>
<dbReference type="GO" id="GO:0006508">
    <property type="term" value="P:proteolysis"/>
    <property type="evidence" value="ECO:0007669"/>
    <property type="project" value="UniProtKB-KW"/>
</dbReference>
<dbReference type="GO" id="GO:0006417">
    <property type="term" value="P:regulation of translation"/>
    <property type="evidence" value="ECO:0007669"/>
    <property type="project" value="UniProtKB-KW"/>
</dbReference>
<dbReference type="GO" id="GO:0039520">
    <property type="term" value="P:symbiont-mediated activation of host autophagy"/>
    <property type="evidence" value="ECO:0000250"/>
    <property type="project" value="UniProtKB"/>
</dbReference>
<dbReference type="GO" id="GO:0039525">
    <property type="term" value="P:symbiont-mediated perturbation of host chromatin organization"/>
    <property type="evidence" value="ECO:0007669"/>
    <property type="project" value="UniProtKB-KW"/>
</dbReference>
<dbReference type="GO" id="GO:0019082">
    <property type="term" value="P:viral protein processing"/>
    <property type="evidence" value="ECO:0007669"/>
    <property type="project" value="InterPro"/>
</dbReference>
<dbReference type="GO" id="GO:0039694">
    <property type="term" value="P:viral RNA genome replication"/>
    <property type="evidence" value="ECO:0007669"/>
    <property type="project" value="InterPro"/>
</dbReference>
<dbReference type="GO" id="GO:0019062">
    <property type="term" value="P:virion attachment to host cell"/>
    <property type="evidence" value="ECO:0007669"/>
    <property type="project" value="UniProtKB-KW"/>
</dbReference>
<dbReference type="CDD" id="cd23210">
    <property type="entry name" value="Aphthovirus_RdRp"/>
    <property type="match status" value="1"/>
</dbReference>
<dbReference type="CDD" id="cd00205">
    <property type="entry name" value="rhv_like"/>
    <property type="match status" value="3"/>
</dbReference>
<dbReference type="FunFam" id="1.20.960.20:FF:000002">
    <property type="entry name" value="Genome polyprotein"/>
    <property type="match status" value="1"/>
</dbReference>
<dbReference type="FunFam" id="2.40.10.10:FF:000108">
    <property type="entry name" value="Genome polyprotein"/>
    <property type="match status" value="1"/>
</dbReference>
<dbReference type="FunFam" id="2.60.120.20:FF:000005">
    <property type="entry name" value="Genome polyprotein"/>
    <property type="match status" value="1"/>
</dbReference>
<dbReference type="FunFam" id="2.60.120.20:FF:000006">
    <property type="entry name" value="Genome polyprotein"/>
    <property type="match status" value="1"/>
</dbReference>
<dbReference type="FunFam" id="3.30.70.270:FF:000031">
    <property type="entry name" value="Genome polyprotein"/>
    <property type="match status" value="1"/>
</dbReference>
<dbReference type="Gene3D" id="1.20.960.20">
    <property type="match status" value="1"/>
</dbReference>
<dbReference type="Gene3D" id="2.60.120.20">
    <property type="match status" value="3"/>
</dbReference>
<dbReference type="Gene3D" id="3.30.70.270">
    <property type="match status" value="2"/>
</dbReference>
<dbReference type="Gene3D" id="4.10.90.10">
    <property type="entry name" value="Capsid protein VP4 superfamily, Picornavirus"/>
    <property type="match status" value="1"/>
</dbReference>
<dbReference type="Gene3D" id="3.90.70.10">
    <property type="entry name" value="Cysteine proteinases"/>
    <property type="match status" value="1"/>
</dbReference>
<dbReference type="Gene3D" id="2.40.10.10">
    <property type="entry name" value="Trypsin-like serine proteases"/>
    <property type="match status" value="2"/>
</dbReference>
<dbReference type="InterPro" id="IPR015031">
    <property type="entry name" value="Capsid_VP4_Picornavir"/>
</dbReference>
<dbReference type="InterPro" id="IPR037080">
    <property type="entry name" value="Capsid_VP4_sf_Picornavirus"/>
</dbReference>
<dbReference type="InterPro" id="IPR043502">
    <property type="entry name" value="DNA/RNA_pol_sf"/>
</dbReference>
<dbReference type="InterPro" id="IPR004080">
    <property type="entry name" value="FMDV_VP1_coat"/>
</dbReference>
<dbReference type="InterPro" id="IPR004004">
    <property type="entry name" value="Helic/Pol/Pept_Calicivir-typ"/>
</dbReference>
<dbReference type="InterPro" id="IPR000605">
    <property type="entry name" value="Helicase_SF3_ssDNA/RNA_vir"/>
</dbReference>
<dbReference type="InterPro" id="IPR014759">
    <property type="entry name" value="Helicase_SF3_ssRNA_vir"/>
</dbReference>
<dbReference type="InterPro" id="IPR027417">
    <property type="entry name" value="P-loop_NTPase"/>
</dbReference>
<dbReference type="InterPro" id="IPR038765">
    <property type="entry name" value="Papain-like_cys_pep_sf"/>
</dbReference>
<dbReference type="InterPro" id="IPR044067">
    <property type="entry name" value="PCV_3C_PRO"/>
</dbReference>
<dbReference type="InterPro" id="IPR008739">
    <property type="entry name" value="Peptidase_C28"/>
</dbReference>
<dbReference type="InterPro" id="IPR000199">
    <property type="entry name" value="Peptidase_C3A/C3B_picornavir"/>
</dbReference>
<dbReference type="InterPro" id="IPR009003">
    <property type="entry name" value="Peptidase_S1_PA"/>
</dbReference>
<dbReference type="InterPro" id="IPR043504">
    <property type="entry name" value="Peptidase_S1_PA_chymotrypsin"/>
</dbReference>
<dbReference type="InterPro" id="IPR001676">
    <property type="entry name" value="Picornavirus_capsid"/>
</dbReference>
<dbReference type="InterPro" id="IPR043128">
    <property type="entry name" value="Rev_trsase/Diguanyl_cyclase"/>
</dbReference>
<dbReference type="InterPro" id="IPR033703">
    <property type="entry name" value="Rhv-like"/>
</dbReference>
<dbReference type="InterPro" id="IPR001205">
    <property type="entry name" value="RNA-dir_pol_C"/>
</dbReference>
<dbReference type="InterPro" id="IPR007094">
    <property type="entry name" value="RNA-dir_pol_PSvirus"/>
</dbReference>
<dbReference type="InterPro" id="IPR029053">
    <property type="entry name" value="Viral_coat"/>
</dbReference>
<dbReference type="Pfam" id="PF05408">
    <property type="entry name" value="Peptidase_C28"/>
    <property type="match status" value="1"/>
</dbReference>
<dbReference type="Pfam" id="PF00548">
    <property type="entry name" value="Peptidase_C3"/>
    <property type="match status" value="1"/>
</dbReference>
<dbReference type="Pfam" id="PF00680">
    <property type="entry name" value="RdRP_1"/>
    <property type="match status" value="1"/>
</dbReference>
<dbReference type="Pfam" id="PF00073">
    <property type="entry name" value="Rhv"/>
    <property type="match status" value="2"/>
</dbReference>
<dbReference type="Pfam" id="PF22663">
    <property type="entry name" value="Rhv_5"/>
    <property type="match status" value="1"/>
</dbReference>
<dbReference type="Pfam" id="PF00910">
    <property type="entry name" value="RNA_helicase"/>
    <property type="match status" value="1"/>
</dbReference>
<dbReference type="Pfam" id="PF08935">
    <property type="entry name" value="VP4_2"/>
    <property type="match status" value="1"/>
</dbReference>
<dbReference type="PRINTS" id="PR00918">
    <property type="entry name" value="CALICVIRUSNS"/>
</dbReference>
<dbReference type="PRINTS" id="PR01542">
    <property type="entry name" value="FMDVP1COAT"/>
</dbReference>
<dbReference type="SUPFAM" id="SSF54001">
    <property type="entry name" value="Cysteine proteinases"/>
    <property type="match status" value="1"/>
</dbReference>
<dbReference type="SUPFAM" id="SSF56672">
    <property type="entry name" value="DNA/RNA polymerases"/>
    <property type="match status" value="1"/>
</dbReference>
<dbReference type="SUPFAM" id="SSF52540">
    <property type="entry name" value="P-loop containing nucleoside triphosphate hydrolases"/>
    <property type="match status" value="1"/>
</dbReference>
<dbReference type="SUPFAM" id="SSF88633">
    <property type="entry name" value="Positive stranded ssRNA viruses"/>
    <property type="match status" value="2"/>
</dbReference>
<dbReference type="SUPFAM" id="SSF50494">
    <property type="entry name" value="Trypsin-like serine proteases"/>
    <property type="match status" value="1"/>
</dbReference>
<dbReference type="PROSITE" id="PS51887">
    <property type="entry name" value="APHTHOVIRUS_LPRO"/>
    <property type="match status" value="1"/>
</dbReference>
<dbReference type="PROSITE" id="PS51874">
    <property type="entry name" value="PCV_3C_PRO"/>
    <property type="match status" value="1"/>
</dbReference>
<dbReference type="PROSITE" id="PS50507">
    <property type="entry name" value="RDRP_SSRNA_POS"/>
    <property type="match status" value="1"/>
</dbReference>
<dbReference type="PROSITE" id="PS51218">
    <property type="entry name" value="SF3_HELICASE_2"/>
    <property type="match status" value="1"/>
</dbReference>
<feature type="chain" id="PRO_0000422517" description="Genome polyprotein" evidence="1">
    <location>
        <begin position="1"/>
        <end position="2327"/>
    </location>
</feature>
<feature type="chain" id="PRO_5000064843" description="Leader protease" evidence="1">
    <location>
        <begin position="1"/>
        <end position="201"/>
    </location>
</feature>
<feature type="chain" id="PRO_0000422518" description="Capsid protein VP0" evidence="8">
    <location>
        <begin position="202"/>
        <end position="504"/>
    </location>
</feature>
<feature type="chain" id="PRO_5000064844" description="Capsid protein VP4" evidence="8">
    <location>
        <begin position="202"/>
        <end position="286"/>
    </location>
</feature>
<feature type="chain" id="PRO_5000064845" description="Capsid protein VP2" evidence="8">
    <location>
        <begin position="287"/>
        <end position="504"/>
    </location>
</feature>
<feature type="chain" id="PRO_0000039886" description="Capsid protein VP3" evidence="8">
    <location>
        <begin position="505"/>
        <end position="723"/>
    </location>
</feature>
<feature type="chain" id="PRO_0000039887" description="Capsid protein VP1" evidence="1">
    <location>
        <begin position="724"/>
        <end position="930"/>
    </location>
</feature>
<feature type="chain" id="PRO_0000039888" description="Protein 2A" evidence="8">
    <location>
        <begin position="931"/>
        <end position="948"/>
    </location>
</feature>
<feature type="chain" id="PRO_0000310979" description="Protein 2B" evidence="8">
    <location>
        <begin position="949"/>
        <end position="1102"/>
    </location>
</feature>
<feature type="chain" id="PRO_5000064850" description="Protein 2C" evidence="8">
    <location>
        <begin position="1103"/>
        <end position="1420"/>
    </location>
</feature>
<feature type="chain" id="PRO_5000064851" description="Protein 3A" evidence="8">
    <location>
        <begin position="1421"/>
        <end position="1573"/>
    </location>
</feature>
<feature type="chain" id="PRO_5000064852" description="Protein 3B-1" evidence="8">
    <location>
        <begin position="1574"/>
        <end position="1596"/>
    </location>
</feature>
<feature type="chain" id="PRO_5000064853" description="Protein 3B-2" evidence="8">
    <location>
        <begin position="1597"/>
        <end position="1620"/>
    </location>
</feature>
<feature type="chain" id="PRO_5000064854" description="Protein 3B-3" evidence="8">
    <location>
        <begin position="1621"/>
        <end position="1644"/>
    </location>
</feature>
<feature type="chain" id="PRO_0000039889" description="Protease 3C" evidence="8">
    <location>
        <begin position="1645"/>
        <end position="1857"/>
    </location>
</feature>
<feature type="chain" id="PRO_0000039890" description="RNA-directed RNA polymerase 3D-POL" evidence="8">
    <location>
        <begin position="1858"/>
        <end position="2327"/>
    </location>
</feature>
<feature type="topological domain" description="Cytoplasmic" evidence="8">
    <location>
        <begin position="1"/>
        <end position="1475"/>
    </location>
</feature>
<feature type="intramembrane region" evidence="8">
    <location>
        <begin position="1476"/>
        <end position="1496"/>
    </location>
</feature>
<feature type="topological domain" description="Cytoplasmic" evidence="8">
    <location>
        <begin position="1497"/>
        <end position="2327"/>
    </location>
</feature>
<feature type="domain" description="Peptidase C28">
    <location>
        <begin position="1"/>
        <end position="201"/>
    </location>
</feature>
<feature type="domain" description="SF3 helicase" evidence="10">
    <location>
        <begin position="1184"/>
        <end position="1348"/>
    </location>
</feature>
<feature type="domain" description="Peptidase C3" evidence="11">
    <location>
        <begin position="1647"/>
        <end position="1843"/>
    </location>
</feature>
<feature type="domain" description="RdRp catalytic" evidence="9">
    <location>
        <begin position="2091"/>
        <end position="2209"/>
    </location>
</feature>
<feature type="region of interest" description="Disordered" evidence="12">
    <location>
        <begin position="196"/>
        <end position="218"/>
    </location>
</feature>
<feature type="region of interest" description="Disordered" evidence="12">
    <location>
        <begin position="238"/>
        <end position="265"/>
    </location>
</feature>
<feature type="region of interest" description="Antigenic epitope" evidence="2">
    <location>
        <begin position="787"/>
        <end position="795"/>
    </location>
</feature>
<feature type="region of interest" description="Disordered" evidence="12">
    <location>
        <begin position="1524"/>
        <end position="1584"/>
    </location>
</feature>
<feature type="short sequence motif" description="Cell attachment site" evidence="4">
    <location>
        <begin position="864"/>
        <end position="866"/>
    </location>
</feature>
<feature type="short sequence motif" description="Nuclear localization signal" evidence="14">
    <location>
        <begin position="1873"/>
        <end position="1881"/>
    </location>
</feature>
<feature type="compositionally biased region" description="Polar residues" evidence="12">
    <location>
        <begin position="204"/>
        <end position="218"/>
    </location>
</feature>
<feature type="compositionally biased region" description="Polar residues" evidence="12">
    <location>
        <begin position="238"/>
        <end position="251"/>
    </location>
</feature>
<feature type="compositionally biased region" description="Low complexity" evidence="12">
    <location>
        <begin position="252"/>
        <end position="265"/>
    </location>
</feature>
<feature type="compositionally biased region" description="Basic and acidic residues" evidence="12">
    <location>
        <begin position="1544"/>
        <end position="1558"/>
    </location>
</feature>
<feature type="active site" description="For leader protease activity" evidence="1">
    <location>
        <position position="51"/>
    </location>
</feature>
<feature type="active site" description="For leader protease activity" evidence="1">
    <location>
        <position position="148"/>
    </location>
</feature>
<feature type="active site" description="For leader protease activity" evidence="1">
    <location>
        <position position="163"/>
    </location>
</feature>
<feature type="active site" description="For protease 3C activity; Proton donor/acceptor" evidence="11">
    <location>
        <position position="1690"/>
    </location>
</feature>
<feature type="active site" description="For protease 3C activity" evidence="11">
    <location>
        <position position="1728"/>
    </location>
</feature>
<feature type="active site" description="For protease 3C activity" evidence="11">
    <location>
        <position position="1807"/>
    </location>
</feature>
<feature type="active site" description="For RdRp activity" evidence="7">
    <location>
        <position position="2195"/>
    </location>
</feature>
<feature type="binding site" evidence="10">
    <location>
        <begin position="1212"/>
        <end position="1219"/>
    </location>
    <ligand>
        <name>ATP</name>
        <dbReference type="ChEBI" id="CHEBI:30616"/>
    </ligand>
</feature>
<feature type="site" description="Cleavage; by leader protease" evidence="8">
    <location>
        <begin position="201"/>
        <end position="202"/>
    </location>
</feature>
<feature type="site" description="Cleavage" evidence="8">
    <location>
        <begin position="286"/>
        <end position="287"/>
    </location>
</feature>
<feature type="site" description="Cleavage; by picornain 3C" evidence="8">
    <location>
        <begin position="504"/>
        <end position="505"/>
    </location>
</feature>
<feature type="site" description="Cleavage; by picornain 3C" evidence="8">
    <location>
        <begin position="723"/>
        <end position="724"/>
    </location>
</feature>
<feature type="site" description="Cleavage; by picornain 3C" evidence="8">
    <location>
        <begin position="930"/>
        <end position="931"/>
    </location>
</feature>
<feature type="site" description="Cleavage; by ribosomal skip" evidence="8">
    <location>
        <begin position="948"/>
        <end position="949"/>
    </location>
</feature>
<feature type="site" description="Cleavage; by picornain 3C" evidence="8">
    <location>
        <begin position="1102"/>
        <end position="1103"/>
    </location>
</feature>
<feature type="site" description="Cleavage; by picornain 3C" evidence="8">
    <location>
        <begin position="1420"/>
        <end position="1421"/>
    </location>
</feature>
<feature type="site" description="Cleavage; by picornain 3C" evidence="8">
    <location>
        <begin position="1573"/>
        <end position="1574"/>
    </location>
</feature>
<feature type="site" description="Cleavage; by picornain 3C" evidence="8">
    <location>
        <begin position="1596"/>
        <end position="1597"/>
    </location>
</feature>
<feature type="site" description="Cleavage; by picornain 3C" evidence="8">
    <location>
        <begin position="1620"/>
        <end position="1621"/>
    </location>
</feature>
<feature type="site" description="Cleavage; by picornain 3C" evidence="8">
    <location>
        <begin position="1644"/>
        <end position="1645"/>
    </location>
</feature>
<feature type="site" description="Cleavage; by picornain 3C" evidence="8">
    <location>
        <begin position="1857"/>
        <end position="1858"/>
    </location>
</feature>
<feature type="modified residue" description="O-(5'-phospho-RNA)-tyrosine" evidence="4">
    <location>
        <position position="1576"/>
    </location>
</feature>
<feature type="modified residue" description="O-(5'-phospho-RNA)-tyrosine" evidence="4">
    <location>
        <position position="1599"/>
    </location>
</feature>
<feature type="modified residue" description="O-(5'-phospho-RNA)-tyrosine" evidence="4">
    <location>
        <position position="1623"/>
    </location>
</feature>
<feature type="lipid moiety-binding region" description="N-myristoyl glycine; by host" evidence="13">
    <location>
        <position position="202"/>
    </location>
</feature>
<feature type="disulfide bond" description="Interchain; in VP3 dimers" evidence="4">
    <location>
        <position position="511"/>
    </location>
</feature>
<feature type="splice variant" id="VSP_046532" description="In isoform Lb." evidence="16">
    <location>
        <begin position="1"/>
        <end position="28"/>
    </location>
</feature>
<feature type="sequence variant">
    <original>A</original>
    <variation>V</variation>
    <location>
        <position position="1804"/>
    </location>
</feature>
<feature type="sequence variant">
    <original>K</original>
    <variation>R</variation>
    <location>
        <position position="1916"/>
    </location>
</feature>
<feature type="sequence variant">
    <original>A</original>
    <variation>V</variation>
    <location>
        <position position="1958"/>
    </location>
</feature>
<feature type="sequence variant">
    <original>G</original>
    <variation>S</variation>
    <location>
        <position position="1975"/>
    </location>
</feature>
<feature type="sequence variant">
    <original>V</original>
    <variation>A</variation>
    <location>
        <position position="2000"/>
    </location>
</feature>
<feature type="sequence variant">
    <original>W</original>
    <variation>R</variation>
    <location>
        <position position="2080"/>
    </location>
</feature>
<feature type="sequence variant">
    <original>F</original>
    <variation>S</variation>
    <location>
        <position position="2083"/>
    </location>
</feature>
<feature type="sequence variant">
    <original>F</original>
    <variation>L</variation>
    <location>
        <position position="2087"/>
    </location>
</feature>
<feature type="sequence variant">
    <original>H</original>
    <variation>Y</variation>
    <location>
        <position position="2140"/>
    </location>
</feature>
<feature type="sequence variant">
    <original>I</original>
    <variation>V</variation>
    <location>
        <position position="2163"/>
    </location>
</feature>
<feature type="sequence variant">
    <original>A</original>
    <variation>T</variation>
    <location>
        <position position="2261"/>
    </location>
</feature>
<feature type="sequence variant">
    <original>L</original>
    <variation>F</variation>
    <location>
        <position position="2299"/>
    </location>
</feature>
<feature type="sequence variant">
    <original>D</original>
    <variation>R</variation>
    <location>
        <position position="2326"/>
    </location>
</feature>
<feature type="mutagenesis site" description="Decreased transport to the nucleus of transiently expressed 3D and 3CD and severely impaired virus infectivity." evidence="14">
    <original>K</original>
    <variation>A</variation>
    <variation>E</variation>
    <location>
        <position position="1875"/>
    </location>
</feature>
<feature type="mutagenesis site" description="Decreased the transport to the nucleus of 3D and 3CD. Severely impaired virus infectivity. Impaired RNA binding." evidence="14">
    <original>K</original>
    <variation>A</variation>
    <variation>E</variation>
    <location>
        <position position="1877"/>
    </location>
</feature>
<feature type="sequence conflict" description="In Ref. 2; no nucleotide entry." evidence="16" ref="2">
    <original>LRAA</original>
    <variation>SRH</variation>
    <location>
        <begin position="789"/>
        <end position="792"/>
    </location>
</feature>
<feature type="sequence conflict" description="In Ref. 2; no nucleotide entry." evidence="16" ref="2">
    <original>P</original>
    <variation>L</variation>
    <location>
        <position position="947"/>
    </location>
</feature>
<feature type="sequence conflict" description="In Ref. 2; no nucleotide entry." evidence="16" ref="2">
    <location>
        <position position="1008"/>
    </location>
</feature>
<feature type="strand" evidence="28">
    <location>
        <begin position="1580"/>
        <end position="1583"/>
    </location>
</feature>
<feature type="strand" evidence="28">
    <location>
        <begin position="1859"/>
        <end position="1870"/>
    </location>
</feature>
<feature type="strand" evidence="28">
    <location>
        <begin position="1878"/>
        <end position="1880"/>
    </location>
</feature>
<feature type="helix" evidence="28">
    <location>
        <begin position="1884"/>
        <end position="1887"/>
    </location>
</feature>
<feature type="strand" evidence="28">
    <location>
        <begin position="1890"/>
        <end position="1893"/>
    </location>
</feature>
<feature type="helix" evidence="28">
    <location>
        <begin position="1909"/>
        <end position="1912"/>
    </location>
</feature>
<feature type="turn" evidence="28">
    <location>
        <begin position="1913"/>
        <end position="1916"/>
    </location>
</feature>
<feature type="helix" evidence="28">
    <location>
        <begin position="1925"/>
        <end position="1946"/>
    </location>
</feature>
<feature type="helix" evidence="28">
    <location>
        <begin position="1955"/>
        <end position="1960"/>
    </location>
</feature>
<feature type="strand" evidence="26">
    <location>
        <begin position="1963"/>
        <end position="1965"/>
    </location>
</feature>
<feature type="strand" evidence="25">
    <location>
        <begin position="1970"/>
        <end position="1972"/>
    </location>
</feature>
<feature type="turn" evidence="28">
    <location>
        <begin position="1976"/>
        <end position="1982"/>
    </location>
</feature>
<feature type="helix" evidence="28">
    <location>
        <begin position="1985"/>
        <end position="1987"/>
    </location>
</feature>
<feature type="turn" evidence="28">
    <location>
        <begin position="1991"/>
        <end position="1994"/>
    </location>
</feature>
<feature type="helix" evidence="28">
    <location>
        <begin position="1998"/>
        <end position="2008"/>
    </location>
</feature>
<feature type="strand" evidence="28">
    <location>
        <begin position="2016"/>
        <end position="2020"/>
    </location>
</feature>
<feature type="strand" evidence="28">
    <location>
        <begin position="2024"/>
        <end position="2026"/>
    </location>
</feature>
<feature type="helix" evidence="28">
    <location>
        <begin position="2027"/>
        <end position="2031"/>
    </location>
</feature>
<feature type="strand" evidence="28">
    <location>
        <begin position="2037"/>
        <end position="2040"/>
    </location>
</feature>
<feature type="helix" evidence="28">
    <location>
        <begin position="2043"/>
        <end position="2062"/>
    </location>
</feature>
<feature type="turn" evidence="28">
    <location>
        <begin position="2066"/>
        <end position="2069"/>
    </location>
</feature>
<feature type="helix" evidence="28">
    <location>
        <begin position="2076"/>
        <end position="2087"/>
    </location>
</feature>
<feature type="strand" evidence="28">
    <location>
        <begin position="2090"/>
        <end position="2100"/>
    </location>
</feature>
<feature type="turn" evidence="28">
    <location>
        <begin position="2101"/>
        <end position="2104"/>
    </location>
</feature>
<feature type="helix" evidence="28">
    <location>
        <begin position="2107"/>
        <end position="2117"/>
    </location>
</feature>
<feature type="helix" evidence="28">
    <location>
        <begin position="2120"/>
        <end position="2122"/>
    </location>
</feature>
<feature type="helix" evidence="28">
    <location>
        <begin position="2127"/>
        <end position="2133"/>
    </location>
</feature>
<feature type="strand" evidence="28">
    <location>
        <begin position="2136"/>
        <end position="2152"/>
    </location>
</feature>
<feature type="strand" evidence="24">
    <location>
        <begin position="2157"/>
        <end position="2159"/>
    </location>
</feature>
<feature type="helix" evidence="28">
    <location>
        <begin position="2160"/>
        <end position="2179"/>
    </location>
</feature>
<feature type="strand" evidence="28">
    <location>
        <begin position="2180"/>
        <end position="2182"/>
    </location>
</feature>
<feature type="helix" evidence="27">
    <location>
        <begin position="2185"/>
        <end position="2187"/>
    </location>
</feature>
<feature type="strand" evidence="28">
    <location>
        <begin position="2189"/>
        <end position="2193"/>
    </location>
</feature>
<feature type="strand" evidence="28">
    <location>
        <begin position="2196"/>
        <end position="2203"/>
    </location>
</feature>
<feature type="helix" evidence="28">
    <location>
        <begin position="2208"/>
        <end position="2210"/>
    </location>
</feature>
<feature type="helix" evidence="28">
    <location>
        <begin position="2211"/>
        <end position="2215"/>
    </location>
</feature>
<feature type="turn" evidence="28">
    <location>
        <begin position="2216"/>
        <end position="2218"/>
    </location>
</feature>
<feature type="strand" evidence="28">
    <location>
        <begin position="2221"/>
        <end position="2227"/>
    </location>
</feature>
<feature type="strand" evidence="24">
    <location>
        <begin position="2228"/>
        <end position="2230"/>
    </location>
</feature>
<feature type="turn" evidence="28">
    <location>
        <begin position="2237"/>
        <end position="2239"/>
    </location>
</feature>
<feature type="strand" evidence="28">
    <location>
        <begin position="2245"/>
        <end position="2249"/>
    </location>
</feature>
<feature type="turn" evidence="28">
    <location>
        <begin position="2251"/>
        <end position="2253"/>
    </location>
</feature>
<feature type="strand" evidence="28">
    <location>
        <begin position="2256"/>
        <end position="2259"/>
    </location>
</feature>
<feature type="helix" evidence="28">
    <location>
        <begin position="2262"/>
        <end position="2269"/>
    </location>
</feature>
<feature type="strand" evidence="28">
    <location>
        <begin position="2271"/>
        <end position="2273"/>
    </location>
</feature>
<feature type="helix" evidence="28">
    <location>
        <begin position="2277"/>
        <end position="2288"/>
    </location>
</feature>
<feature type="helix" evidence="28">
    <location>
        <begin position="2289"/>
        <end position="2291"/>
    </location>
</feature>
<feature type="helix" evidence="28">
    <location>
        <begin position="2293"/>
        <end position="2300"/>
    </location>
</feature>
<feature type="helix" evidence="28">
    <location>
        <begin position="2301"/>
        <end position="2303"/>
    </location>
</feature>
<feature type="turn" evidence="28">
    <location>
        <begin position="2304"/>
        <end position="2306"/>
    </location>
</feature>
<feature type="helix" evidence="28">
    <location>
        <begin position="2312"/>
        <end position="2327"/>
    </location>
</feature>
<evidence type="ECO:0000250" key="1"/>
<evidence type="ECO:0000250" key="2">
    <source>
        <dbReference type="UniProtKB" id="A2I7M2"/>
    </source>
</evidence>
<evidence type="ECO:0000250" key="3">
    <source>
        <dbReference type="UniProtKB" id="P03300"/>
    </source>
</evidence>
<evidence type="ECO:0000250" key="4">
    <source>
        <dbReference type="UniProtKB" id="P03305"/>
    </source>
</evidence>
<evidence type="ECO:0000250" key="5">
    <source>
        <dbReference type="UniProtKB" id="P03306"/>
    </source>
</evidence>
<evidence type="ECO:0000250" key="6">
    <source>
        <dbReference type="UniProtKB" id="P03308"/>
    </source>
</evidence>
<evidence type="ECO:0000250" key="7">
    <source>
        <dbReference type="UniProtKB" id="P12296"/>
    </source>
</evidence>
<evidence type="ECO:0000255" key="8"/>
<evidence type="ECO:0000255" key="9">
    <source>
        <dbReference type="PROSITE-ProRule" id="PRU00539"/>
    </source>
</evidence>
<evidence type="ECO:0000255" key="10">
    <source>
        <dbReference type="PROSITE-ProRule" id="PRU00551"/>
    </source>
</evidence>
<evidence type="ECO:0000255" key="11">
    <source>
        <dbReference type="PROSITE-ProRule" id="PRU01222"/>
    </source>
</evidence>
<evidence type="ECO:0000256" key="12">
    <source>
        <dbReference type="SAM" id="MobiDB-lite"/>
    </source>
</evidence>
<evidence type="ECO:0000269" key="13">
    <source>
    </source>
</evidence>
<evidence type="ECO:0000269" key="14">
    <source>
    </source>
</evidence>
<evidence type="ECO:0000269" key="15">
    <source>
    </source>
</evidence>
<evidence type="ECO:0000305" key="16"/>
<evidence type="ECO:0007744" key="17">
    <source>
        <dbReference type="PDB" id="4WYL"/>
    </source>
</evidence>
<evidence type="ECO:0007744" key="18">
    <source>
        <dbReference type="PDB" id="4WYW"/>
    </source>
</evidence>
<evidence type="ECO:0007744" key="19">
    <source>
        <dbReference type="PDB" id="4WZM"/>
    </source>
</evidence>
<evidence type="ECO:0007744" key="20">
    <source>
        <dbReference type="PDB" id="4WZQ"/>
    </source>
</evidence>
<evidence type="ECO:0007744" key="21">
    <source>
        <dbReference type="PDB" id="4X2B"/>
    </source>
</evidence>
<evidence type="ECO:0007744" key="22">
    <source>
        <dbReference type="PDB" id="8C1N"/>
    </source>
</evidence>
<evidence type="ECO:0007744" key="23">
    <source>
        <dbReference type="PDB" id="8C2P"/>
    </source>
</evidence>
<evidence type="ECO:0007829" key="24">
    <source>
        <dbReference type="PDB" id="4WYL"/>
    </source>
</evidence>
<evidence type="ECO:0007829" key="25">
    <source>
        <dbReference type="PDB" id="4WYW"/>
    </source>
</evidence>
<evidence type="ECO:0007829" key="26">
    <source>
        <dbReference type="PDB" id="4WZQ"/>
    </source>
</evidence>
<evidence type="ECO:0007829" key="27">
    <source>
        <dbReference type="PDB" id="6GVY"/>
    </source>
</evidence>
<evidence type="ECO:0007829" key="28">
    <source>
        <dbReference type="PDB" id="8C1N"/>
    </source>
</evidence>
<comment type="function">
    <molecule>Leader protease</molecule>
    <text evidence="4 6">Autocatalytically cleaves itself from the polyprotein at the L/VP0 junction. Also cleaves the host translation initiation factors EIF4G1 and EIF4G3, in order to shut off the capped cellular mRNA transcription. Plays a role in counteracting host innate antiviral response using diverse mechanisms. Possesses a deubiquitinase activity acting on both 'Lys-48' and 'Lys-63'-linked polyubiquitin chains. In turn, inhibits the ubiquitination and subsequent activation of key signaling molecules of type I IFN response such as host RIGI, TBK1, TRAF3 and TRAF6. Inhibits host NF-kappa-B activity by inducing a decrease in RELA mRNA levels. Cleaves a peptide bond in the C-terminus of host ISG15, resulting in the damaging of this modifier that can no longer be attached to target proteins. Also cleaves host G3BP1 and G3BP2 in order to inhibit cytoplasmic stress granules assembly.</text>
</comment>
<comment type="function">
    <molecule>Capsid protein VP4</molecule>
    <text evidence="3">Lies on the inner surface of the capsid shell. After binding to the host receptor, the capsid undergoes conformational changes. Capsid protein VP4 is released, capsid protein VP1 N-terminus is externalized, and together, they shape a pore in the host membrane through which the viral genome is translocated into the host cell cytoplasm. After genome has been released, the channel shrinks.</text>
</comment>
<comment type="function">
    <molecule>Capsid protein VP2</molecule>
    <text evidence="4 5">Forms an icosahedral capsid of pseudo T=3 symmetry with capsid proteins VP1 and VP3. The capsid is composed of 60 copies of each capsid protein organized in the form of twelve pentamers and encloses the viral positive strand RNA genome (By similarity). Upon acidifcation in the endosome, dissociates into pentamers (By similarity).</text>
</comment>
<comment type="function">
    <molecule>Capsid protein VP3</molecule>
    <text evidence="4 5">Forms an icosahedral capsid of pseudo T=3 symmetry with capsid proteins VP0 and VP3. The capsid is composed of 60 copies of each capsid protein organized in the form of twelve pentamers and encloses the viral positive strand RNA genome (By similarity). Upon acidifcation in the endosome, dissociates into pentamers (By similarity).</text>
</comment>
<comment type="function">
    <molecule>Capsid protein VP1</molecule>
    <text evidence="4 5">Forms an icosahedral capsid of pseudo T=3 symmetry with capsid proteins VP2 and VP3. The capsid is composed of 60 copies of each capsid protein organized in the form of twelve pentamers and encloses the viral positive strand RNA genome. Mediates cell entry by attachment to an integrin receptor, usually host ITGAV/ITGB6. In addition, targets host MAVS to suppress type I IFN pathway (By similarity). Upon acidifcation in the endosome, dissociates into pentamers (By similarity).</text>
</comment>
<comment type="function">
    <molecule>Protein 2A</molecule>
    <text evidence="4">Mediates self-processing of the polyprotein by a translational effect termed 'ribosome skipping'. Mechanistically, 2A-mediated cleavage occurs between the C-terminal glycine and the proline of the downstream protein 2B. In the case of foot-and-mouth disease virus, the 2A oligopeptide is post-translationally 'trimmed' from the C-terminus of the upstream protein 1D by 3C proteinase.</text>
</comment>
<comment type="function">
    <molecule>Protein 2B</molecule>
    <text evidence="4">Plays an essential role in the virus replication cycle by acting as a viroporin. Creates a pore in the host endoplasmic reticulum and as a consequence releases Ca2+ in the cytoplasm of infected cell. In turn, high levels of cytoplasmic calcium may trigger membrane trafficking and transport of viral ER-associated proteins to viroplasms, sites of viral genome replication.</text>
</comment>
<comment type="function">
    <molecule>Protein 2C</molecule>
    <text evidence="4">Associates with and induces structural rearrangements of intracellular membranes. Triggers host autophagy by interacting with host BECN1 and thereby promotes viral replication. Participates in viral replication and interacts with host DHX9. Displays RNA-binding, nucleotide binding and NTPase activities. May play a role in virion morphogenesis and viral RNA encapsidation by interacting with the capsid protein VP3.</text>
</comment>
<comment type="function">
    <molecule>Protein 3A</molecule>
    <text evidence="4">Plays important roles in virus replication, virulence and host range. Cooperates with host DDX56 to inhibit IRF3 nuclear translocation and subsequent type I interferon production.</text>
</comment>
<comment type="function">
    <molecule>Protein 3B-1</molecule>
    <text evidence="4">Covalently linked to the 5'-end of both the positive-strand and negative-strand genomic RNAs. Acts as a genome-linked replication primer.</text>
</comment>
<comment type="function">
    <molecule>Protein 3B-2</molecule>
    <text evidence="4">Covalently linked to the 5'-end of both the positive-strand and negative-strand genomic RNAs. Acts as a genome-linked replication primer.</text>
</comment>
<comment type="function">
    <molecule>Protein 3B-3</molecule>
    <text evidence="4">Covalently linked to the 5'-end of both the positive-strand and negative-strand genomic RNAs. Acts as a genome-linked replication primer.</text>
</comment>
<comment type="function">
    <molecule>Protease 3C</molecule>
    <text evidence="4">Cysteine protease that generates mature viral proteins from the precursor polyprotein. In addition to its proteolytic activity, binds to viral RNA and thus influences viral genome replication. RNA and substrate bind cooperatively to the protease.</text>
</comment>
<comment type="function">
    <text evidence="4">RNA-directed RNA polymerase 3D-POL replicates genomic and antigenomic RNA by recognizing replications specific signals. Covalently attaches UMP to a tyrosine of VPg, which is used to prime RNA synthesis. The positive stranded RNA genome is first replicated at virus induced membranous vesicles, creating a dsRNA genomic replication form. This dsRNA is then used as template to synthesize positive stranded RNA genomes. ss(+)RNA genomes are either translated, replicated or encapsidated.</text>
</comment>
<comment type="catalytic activity">
    <molecule>Leader protease</molecule>
    <reaction>
        <text>Autocatalytically cleaves itself from the polyprotein of the foot-and-mouth disease virus by hydrolysis of a Lys-|-Gly bond, but then cleaves host cell initiation factor eIF-4G at bonds -Gly-|-Arg- and -Lys-|-Arg-.</text>
        <dbReference type="EC" id="3.4.22.46"/>
    </reaction>
</comment>
<comment type="catalytic activity">
    <molecule>Protein 2C</molecule>
    <reaction evidence="4">
        <text>a ribonucleoside 5'-triphosphate + H2O = a ribonucleoside 5'-diphosphate + phosphate + H(+)</text>
        <dbReference type="Rhea" id="RHEA:23680"/>
        <dbReference type="ChEBI" id="CHEBI:15377"/>
        <dbReference type="ChEBI" id="CHEBI:15378"/>
        <dbReference type="ChEBI" id="CHEBI:43474"/>
        <dbReference type="ChEBI" id="CHEBI:57930"/>
        <dbReference type="ChEBI" id="CHEBI:61557"/>
        <dbReference type="EC" id="3.6.1.15"/>
    </reaction>
</comment>
<comment type="catalytic activity">
    <molecule>RNA-directed RNA polymerase 3D-POL</molecule>
    <reaction evidence="9 14">
        <text>RNA(n) + a ribonucleoside 5'-triphosphate = RNA(n+1) + diphosphate</text>
        <dbReference type="Rhea" id="RHEA:21248"/>
        <dbReference type="Rhea" id="RHEA-COMP:14527"/>
        <dbReference type="Rhea" id="RHEA-COMP:17342"/>
        <dbReference type="ChEBI" id="CHEBI:33019"/>
        <dbReference type="ChEBI" id="CHEBI:61557"/>
        <dbReference type="ChEBI" id="CHEBI:140395"/>
        <dbReference type="EC" id="2.7.7.48"/>
    </reaction>
</comment>
<comment type="catalytic activity">
    <molecule>Protease 3C</molecule>
    <reaction evidence="11">
        <text>Selective cleavage of Gln-|-Gly bond in the poliovirus polyprotein. In other picornavirus reactions Glu may be substituted for Gln, and Ser or Thr for Gly.</text>
        <dbReference type="EC" id="3.4.22.28"/>
    </reaction>
</comment>
<comment type="subunit">
    <molecule>Leader protease</molecule>
    <text evidence="4">Interacts with host ISG15.</text>
</comment>
<comment type="subunit">
    <molecule>Capsid protein VP1</molecule>
    <text evidence="4">Interacts (via R-G-D motif) with host ITGAV/ITGB6 (By similarity). Interacts with host MAVS; this interaction inhibits binding of host TRAF3 to MAVS, thereby suppressing interferon-mediated responses (By similarity).</text>
</comment>
<comment type="subunit">
    <molecule>Protein 2B</molecule>
    <text evidence="4">Forms homooligomers.</text>
</comment>
<comment type="subunit">
    <molecule>Protein 2C</molecule>
    <text evidence="4">Homohexamer. Interacts with host VIM. Interacts with host BECN1.</text>
</comment>
<comment type="subunit">
    <molecule>Protein 3A</molecule>
    <text evidence="4">Interacts with host DCTN3.</text>
</comment>
<comment type="subunit">
    <molecule>Protein 3B-1</molecule>
    <text evidence="15">Interacts with RNA-dependent RNA polymerase; this interaction allows 3B-1 to binds 2 polymerases and act as a primer. It also allows the recruitment of the RNA-dependent RNA polymerase to host membranes.</text>
</comment>
<comment type="subunit">
    <molecule>Protein 3B-2</molecule>
    <text evidence="15">Interacts with RNA-dependent RNA polymerase; this interaction allows 3B-2 to act as a primer.</text>
</comment>
<comment type="subunit">
    <molecule>Protein 3B-3</molecule>
    <text evidence="15">Interacts with RNA-dependent RNA polymerase; this interaction allows 3B-3 to act as a primer.</text>
</comment>
<comment type="subunit">
    <molecule>RNA-directed RNA polymerase 3D-POL</molecule>
    <text evidence="15">Interacts with 3B-1; this interaction allows 3B-1 to binds 2 polymerases and act as a primer. It also allows the recruitment of the RNA-dependent RNA polymerase to host membranes (PubMed:37126532). Interacts with 3B-2; this interaction allows 3B-2 to act as a primer (PubMed:37126532). Interacts with 3B-3; this interaction allows 3B-3 to act as a primer (PubMed:37126532).</text>
</comment>
<comment type="subcellular location">
    <molecule>Leader protease</molecule>
    <subcellularLocation>
        <location evidence="4">Host nucleus</location>
    </subcellularLocation>
    <subcellularLocation>
        <location evidence="4">Host cytoplasm</location>
    </subcellularLocation>
</comment>
<comment type="subcellular location">
    <molecule>Capsid protein VP2</molecule>
    <subcellularLocation>
        <location evidence="4">Virion</location>
    </subcellularLocation>
    <subcellularLocation>
        <location evidence="16">Host cytoplasm</location>
    </subcellularLocation>
</comment>
<comment type="subcellular location">
    <molecule>Capsid protein VP3</molecule>
    <subcellularLocation>
        <location evidence="4">Virion</location>
    </subcellularLocation>
    <subcellularLocation>
        <location evidence="16">Host cytoplasm</location>
    </subcellularLocation>
</comment>
<comment type="subcellular location">
    <molecule>Capsid protein VP1</molecule>
    <subcellularLocation>
        <location evidence="4">Virion</location>
    </subcellularLocation>
    <subcellularLocation>
        <location evidence="16">Host cytoplasm</location>
    </subcellularLocation>
</comment>
<comment type="subcellular location">
    <molecule>Protein 2B</molecule>
    <subcellularLocation>
        <location evidence="4">Host endoplasmic reticulum membrane</location>
    </subcellularLocation>
</comment>
<comment type="subcellular location">
    <molecule>Protein 2C</molecule>
    <subcellularLocation>
        <location evidence="16">Host cytoplasmic vesicle membrane</location>
        <topology evidence="16">Peripheral membrane protein</topology>
        <orientation evidence="16">Cytoplasmic side</orientation>
    </subcellularLocation>
    <text evidence="1">Probably localizes to the surface of intracellular membrane vesicles that are induced after virus infection as the site for viral RNA replication. These vesicles are derived from the endoplasmic reticulum (By similarity).</text>
</comment>
<comment type="subcellular location">
    <molecule>Protein 3A</molecule>
    <subcellularLocation>
        <location evidence="16">Host cytoplasmic vesicle membrane</location>
        <topology evidence="16">Peripheral membrane protein</topology>
        <orientation evidence="16">Cytoplasmic side</orientation>
    </subcellularLocation>
    <text evidence="1">Probably localizes to the surface of intracellular membrane vesicles that are induced after virus infection as the site for viral RNA replication. These vesicles are derived from the endoplasmic reticulum (By similarity).</text>
</comment>
<comment type="subcellular location">
    <molecule>Protein 3B-1</molecule>
    <subcellularLocation>
        <location evidence="16">Virion</location>
    </subcellularLocation>
</comment>
<comment type="subcellular location">
    <molecule>Protein 3B-2</molecule>
    <subcellularLocation>
        <location evidence="16">Virion</location>
    </subcellularLocation>
</comment>
<comment type="subcellular location">
    <molecule>Protein 3B-3</molecule>
    <subcellularLocation>
        <location evidence="16">Virion</location>
    </subcellularLocation>
</comment>
<comment type="subcellular location">
    <molecule>Protease 3C</molecule>
    <subcellularLocation>
        <location evidence="16">Host cytoplasm</location>
    </subcellularLocation>
</comment>
<comment type="subcellular location">
    <molecule>RNA-directed RNA polymerase 3D-POL</molecule>
    <subcellularLocation>
        <location evidence="16">Host cytoplasmic vesicle membrane</location>
        <topology evidence="16">Peripheral membrane protein</topology>
        <orientation evidence="16">Cytoplasmic side</orientation>
    </subcellularLocation>
    <text evidence="1">Probably localizes to the surface of intracellular membrane vesicles that are induced after virus infection as the site for viral RNA replication. These vesicles are derived from the endoplasmic reticulum (By similarity).</text>
</comment>
<comment type="alternative products">
    <event type="alternative initiation"/>
    <isoform>
        <id>P03311-1</id>
        <name>Lab</name>
        <sequence type="displayed"/>
    </isoform>
    <isoform>
        <id>P03311-2</id>
        <name>Lb</name>
        <sequence type="described" ref="VSP_046532"/>
    </isoform>
</comment>
<comment type="PTM">
    <molecule>Leader protease</molecule>
    <text evidence="4">Removes six residues from its own C-terminus, generating sLb(pro).</text>
</comment>
<comment type="PTM">
    <molecule>Genome polyprotein</molecule>
    <text evidence="4">Specific enzymatic cleavages in vivo by the viral proteases yield a variety of precursors and mature proteins. The polyprotein seems to be cotranslationally cleaved at the 2A/2B junction by a ribosomal skip from one codon to the next without formation of a peptide bond. This process would release the L-P1-2A peptide from the translational complex.</text>
</comment>
<comment type="PTM">
    <molecule>Capsid protein VP0</molecule>
    <text evidence="4">During virion maturation, immature virions are rendered infectious following cleavage of VP0 into VP4 and VP2. This maturation seems to be an autocatalytic event triggered by the presence of RNA in the capsid and is followed by a conformational change of the particle.</text>
</comment>
<comment type="PTM">
    <molecule>Capsid protein VP4</molecule>
    <text evidence="13">Myristoylation is required during RNA encapsidation and formation of the mature virus particle.</text>
</comment>
<comment type="PTM">
    <molecule>Protein 3B-1</molecule>
    <text evidence="4">Uridylylated by the polymerase and covalently linked to the 5'-end of genomic RNA. These uridylylated forms act as a nucleotide-peptide primer for the polymerase.</text>
</comment>
<comment type="PTM">
    <molecule>Protein 3B-2</molecule>
    <text evidence="4">Uridylylated by the polymerase and covalently linked to the 5'-end of genomic RNA. These uridylylated forms act as a nucleotide-peptide primer for the polymerase.</text>
</comment>
<comment type="PTM">
    <molecule>Protein 3B-3</molecule>
    <text evidence="4">Uridylylated by the polymerase and covalently linked to the 5'-end of genomic RNA. These uridylylated forms act as a nucleotide-peptide primer for the polymerase.</text>
</comment>
<comment type="miscellaneous">
    <molecule>Capsid protein VP1</molecule>
    <text evidence="16">Contains the main antigenic determinants of the virion; therefore, changes in its sequence must be responsible for the high antigenic variability of the virus.</text>
</comment>
<comment type="miscellaneous">
    <text evidence="1">The capsid protein VP1 contains the main antigenic determinants of the virion; therefore, changes in its sequence must be responsible for the high antigenic variability of the virus.</text>
</comment>
<comment type="similarity">
    <text evidence="16">Belongs to the picornaviruses polyprotein family.</text>
</comment>
<keyword id="KW-0002">3D-structure</keyword>
<keyword id="KW-0024">Alternative initiation</keyword>
<keyword id="KW-0067">ATP-binding</keyword>
<keyword id="KW-0167">Capsid protein</keyword>
<keyword id="KW-1167">Clathrin- and caveolin-independent endocytosis of virus by host</keyword>
<keyword id="KW-1165">Clathrin-mediated endocytosis of virus by host</keyword>
<keyword id="KW-0191">Covalent protein-RNA linkage</keyword>
<keyword id="KW-1015">Disulfide bond</keyword>
<keyword id="KW-0347">Helicase</keyword>
<keyword id="KW-1035">Host cytoplasm</keyword>
<keyword id="KW-1036">Host cytoplasmic vesicle</keyword>
<keyword id="KW-1038">Host endoplasmic reticulum</keyword>
<keyword id="KW-1043">Host membrane</keyword>
<keyword id="KW-1048">Host nucleus</keyword>
<keyword id="KW-0945">Host-virus interaction</keyword>
<keyword id="KW-0378">Hydrolase</keyword>
<keyword id="KW-0407">Ion channel</keyword>
<keyword id="KW-0406">Ion transport</keyword>
<keyword id="KW-0449">Lipoprotein</keyword>
<keyword id="KW-0472">Membrane</keyword>
<keyword id="KW-1122">Modulation of host chromatin by virus</keyword>
<keyword id="KW-0519">Myristate</keyword>
<keyword id="KW-0547">Nucleotide-binding</keyword>
<keyword id="KW-0548">Nucleotidyltransferase</keyword>
<keyword id="KW-0597">Phosphoprotein</keyword>
<keyword id="KW-0645">Protease</keyword>
<keyword id="KW-0694">RNA-binding</keyword>
<keyword id="KW-0696">RNA-directed RNA polymerase</keyword>
<keyword id="KW-1143">T=pseudo3 icosahedral capsid protein</keyword>
<keyword id="KW-0788">Thiol protease</keyword>
<keyword id="KW-0808">Transferase</keyword>
<keyword id="KW-0810">Translation regulation</keyword>
<keyword id="KW-0813">Transport</keyword>
<keyword id="KW-1161">Viral attachment to host cell</keyword>
<keyword id="KW-1182">Viral ion channel</keyword>
<keyword id="KW-1162">Viral penetration into host cytoplasm</keyword>
<keyword id="KW-0693">Viral RNA replication</keyword>
<keyword id="KW-0946">Virion</keyword>
<keyword id="KW-1164">Virus endocytosis by host</keyword>
<keyword id="KW-1160">Virus entry into host cell</keyword>
<name>POLG_FMDVS</name>
<proteinExistence type="evidence at protein level"/>